<feature type="chain" id="PRO_0000259118" description="Large ribosomal subunit protein bL31B">
    <location>
        <begin position="1"/>
        <end position="84"/>
    </location>
</feature>
<sequence>MKANIHPDYHPVVFQDASTGTTFLTRSTVTSDRTALWSDGNTYPLVVVDVTSESHPFWTGAQRVMDTAGRVEKFERRYGVRKRP</sequence>
<evidence type="ECO:0000250" key="1"/>
<evidence type="ECO:0000255" key="2">
    <source>
        <dbReference type="HAMAP-Rule" id="MF_00502"/>
    </source>
</evidence>
<evidence type="ECO:0000305" key="3"/>
<name>RL31B_RHOJR</name>
<gene>
    <name evidence="2" type="primary">rpmE2</name>
    <name type="ordered locus">RHA1_ro05619</name>
</gene>
<organism>
    <name type="scientific">Rhodococcus jostii (strain RHA1)</name>
    <dbReference type="NCBI Taxonomy" id="101510"/>
    <lineage>
        <taxon>Bacteria</taxon>
        <taxon>Bacillati</taxon>
        <taxon>Actinomycetota</taxon>
        <taxon>Actinomycetes</taxon>
        <taxon>Mycobacteriales</taxon>
        <taxon>Nocardiaceae</taxon>
        <taxon>Rhodococcus</taxon>
    </lineage>
</organism>
<comment type="function">
    <text evidence="1">Binds the 23S rRNA.</text>
</comment>
<comment type="subunit">
    <text evidence="2">Part of the 50S ribosomal subunit.</text>
</comment>
<comment type="similarity">
    <text evidence="2">Belongs to the bacterial ribosomal protein bL31 family. Type B subfamily.</text>
</comment>
<reference key="1">
    <citation type="journal article" date="2006" name="Proc. Natl. Acad. Sci. U.S.A.">
        <title>The complete genome of Rhodococcus sp. RHA1 provides insights into a catabolic powerhouse.</title>
        <authorList>
            <person name="McLeod M.P."/>
            <person name="Warren R.L."/>
            <person name="Hsiao W.W.L."/>
            <person name="Araki N."/>
            <person name="Myhre M."/>
            <person name="Fernandes C."/>
            <person name="Miyazawa D."/>
            <person name="Wong W."/>
            <person name="Lillquist A.L."/>
            <person name="Wang D."/>
            <person name="Dosanjh M."/>
            <person name="Hara H."/>
            <person name="Petrescu A."/>
            <person name="Morin R.D."/>
            <person name="Yang G."/>
            <person name="Stott J.M."/>
            <person name="Schein J.E."/>
            <person name="Shin H."/>
            <person name="Smailus D."/>
            <person name="Siddiqui A.S."/>
            <person name="Marra M.A."/>
            <person name="Jones S.J.M."/>
            <person name="Holt R."/>
            <person name="Brinkman F.S.L."/>
            <person name="Miyauchi K."/>
            <person name="Fukuda M."/>
            <person name="Davies J.E."/>
            <person name="Mohn W.W."/>
            <person name="Eltis L.D."/>
        </authorList>
    </citation>
    <scope>NUCLEOTIDE SEQUENCE [LARGE SCALE GENOMIC DNA]</scope>
    <source>
        <strain>RHA1</strain>
    </source>
</reference>
<accession>Q0S4Y7</accession>
<dbReference type="EMBL" id="CP000431">
    <property type="protein sequence ID" value="ABG97399.1"/>
    <property type="molecule type" value="Genomic_DNA"/>
</dbReference>
<dbReference type="RefSeq" id="WP_011597770.1">
    <property type="nucleotide sequence ID" value="NC_008268.1"/>
</dbReference>
<dbReference type="SMR" id="Q0S4Y7"/>
<dbReference type="KEGG" id="rha:RHA1_ro05619"/>
<dbReference type="PATRIC" id="fig|101510.16.peg.5664"/>
<dbReference type="eggNOG" id="COG0254">
    <property type="taxonomic scope" value="Bacteria"/>
</dbReference>
<dbReference type="HOGENOM" id="CLU_114306_2_1_11"/>
<dbReference type="OrthoDB" id="9803251at2"/>
<dbReference type="Proteomes" id="UP000008710">
    <property type="component" value="Chromosome"/>
</dbReference>
<dbReference type="GO" id="GO:1990904">
    <property type="term" value="C:ribonucleoprotein complex"/>
    <property type="evidence" value="ECO:0007669"/>
    <property type="project" value="UniProtKB-KW"/>
</dbReference>
<dbReference type="GO" id="GO:0005840">
    <property type="term" value="C:ribosome"/>
    <property type="evidence" value="ECO:0007669"/>
    <property type="project" value="UniProtKB-KW"/>
</dbReference>
<dbReference type="GO" id="GO:0003735">
    <property type="term" value="F:structural constituent of ribosome"/>
    <property type="evidence" value="ECO:0007669"/>
    <property type="project" value="InterPro"/>
</dbReference>
<dbReference type="GO" id="GO:0006412">
    <property type="term" value="P:translation"/>
    <property type="evidence" value="ECO:0007669"/>
    <property type="project" value="UniProtKB-UniRule"/>
</dbReference>
<dbReference type="Gene3D" id="4.10.830.30">
    <property type="entry name" value="Ribosomal protein L31"/>
    <property type="match status" value="1"/>
</dbReference>
<dbReference type="HAMAP" id="MF_00502">
    <property type="entry name" value="Ribosomal_bL31_2"/>
    <property type="match status" value="1"/>
</dbReference>
<dbReference type="InterPro" id="IPR034704">
    <property type="entry name" value="Ribosomal_bL28/bL31-like_sf"/>
</dbReference>
<dbReference type="InterPro" id="IPR002150">
    <property type="entry name" value="Ribosomal_bL31"/>
</dbReference>
<dbReference type="InterPro" id="IPR027493">
    <property type="entry name" value="Ribosomal_bL31_B"/>
</dbReference>
<dbReference type="InterPro" id="IPR042105">
    <property type="entry name" value="Ribosomal_bL31_sf"/>
</dbReference>
<dbReference type="NCBIfam" id="TIGR00105">
    <property type="entry name" value="L31"/>
    <property type="match status" value="1"/>
</dbReference>
<dbReference type="NCBIfam" id="NF002462">
    <property type="entry name" value="PRK01678.1"/>
    <property type="match status" value="1"/>
</dbReference>
<dbReference type="PANTHER" id="PTHR33280">
    <property type="entry name" value="50S RIBOSOMAL PROTEIN L31, CHLOROPLASTIC"/>
    <property type="match status" value="1"/>
</dbReference>
<dbReference type="PANTHER" id="PTHR33280:SF1">
    <property type="entry name" value="LARGE RIBOSOMAL SUBUNIT PROTEIN BL31C"/>
    <property type="match status" value="1"/>
</dbReference>
<dbReference type="Pfam" id="PF01197">
    <property type="entry name" value="Ribosomal_L31"/>
    <property type="match status" value="1"/>
</dbReference>
<dbReference type="PRINTS" id="PR01249">
    <property type="entry name" value="RIBOSOMALL31"/>
</dbReference>
<dbReference type="SUPFAM" id="SSF143800">
    <property type="entry name" value="L28p-like"/>
    <property type="match status" value="1"/>
</dbReference>
<dbReference type="PROSITE" id="PS01143">
    <property type="entry name" value="RIBOSOMAL_L31"/>
    <property type="match status" value="1"/>
</dbReference>
<keyword id="KW-0687">Ribonucleoprotein</keyword>
<keyword id="KW-0689">Ribosomal protein</keyword>
<proteinExistence type="inferred from homology"/>
<protein>
    <recommendedName>
        <fullName evidence="2">Large ribosomal subunit protein bL31B</fullName>
    </recommendedName>
    <alternativeName>
        <fullName evidence="3">50S ribosomal protein L31 type B</fullName>
    </alternativeName>
</protein>